<protein>
    <recommendedName>
        <fullName evidence="1">Argininosuccinate synthase</fullName>
        <ecNumber evidence="1">6.3.4.5</ecNumber>
    </recommendedName>
    <alternativeName>
        <fullName evidence="1">Citrulline--aspartate ligase</fullName>
    </alternativeName>
</protein>
<name>ASSY_MORAB</name>
<proteinExistence type="inferred from homology"/>
<gene>
    <name evidence="1" type="primary">argG</name>
</gene>
<sequence>MTQTVKKVVVAYSGGLDTSVILPWLQENYDNCEIVALFVADVGQGAEELEGIEAKALASGASECYVVDLKDELVENYIYPTLKTGAVYEGTYLLGTSMARQSIAKAQVEIARKVGADALCHGCTGKGNDQIRFESCFAALAPELTVIAPWRIWDLTSRESLLEYLAERDIPTAASGTKIYSRDANAWHISHEGGELEDPWNQPSKQVWTMTVDPIDAPNEPEFLTISVVKGEITAVNGEEMYLIIRYTYLNEKAAAHGVGRVDIVENRLVGMKSRGCYETPGGTVMVEALRGIEELVLDKITRKWKHTVAAEFSHLVYDGRWFTPLCASLLAAAGTLAEEMNGEVIVKMYKGSVQAVQKQSPNSLYSEEFATFGDDNVYDDQSHAEGFIRLYSLSSRIKALASK</sequence>
<evidence type="ECO:0000255" key="1">
    <source>
        <dbReference type="HAMAP-Rule" id="MF_00005"/>
    </source>
</evidence>
<keyword id="KW-0028">Amino-acid biosynthesis</keyword>
<keyword id="KW-0055">Arginine biosynthesis</keyword>
<keyword id="KW-0067">ATP-binding</keyword>
<keyword id="KW-0963">Cytoplasm</keyword>
<keyword id="KW-0436">Ligase</keyword>
<keyword id="KW-0547">Nucleotide-binding</keyword>
<dbReference type="EC" id="6.3.4.5" evidence="1"/>
<dbReference type="EMBL" id="AJ252021">
    <property type="protein sequence ID" value="CAB95023.1"/>
    <property type="molecule type" value="Genomic_DNA"/>
</dbReference>
<dbReference type="SMR" id="Q9K4Y8"/>
<dbReference type="UniPathway" id="UPA00068">
    <property type="reaction ID" value="UER00113"/>
</dbReference>
<dbReference type="GO" id="GO:0005737">
    <property type="term" value="C:cytoplasm"/>
    <property type="evidence" value="ECO:0007669"/>
    <property type="project" value="UniProtKB-SubCell"/>
</dbReference>
<dbReference type="GO" id="GO:0004055">
    <property type="term" value="F:argininosuccinate synthase activity"/>
    <property type="evidence" value="ECO:0007669"/>
    <property type="project" value="UniProtKB-UniRule"/>
</dbReference>
<dbReference type="GO" id="GO:0005524">
    <property type="term" value="F:ATP binding"/>
    <property type="evidence" value="ECO:0007669"/>
    <property type="project" value="UniProtKB-UniRule"/>
</dbReference>
<dbReference type="GO" id="GO:0000053">
    <property type="term" value="P:argininosuccinate metabolic process"/>
    <property type="evidence" value="ECO:0007669"/>
    <property type="project" value="TreeGrafter"/>
</dbReference>
<dbReference type="GO" id="GO:0006526">
    <property type="term" value="P:L-arginine biosynthetic process"/>
    <property type="evidence" value="ECO:0007669"/>
    <property type="project" value="UniProtKB-UniRule"/>
</dbReference>
<dbReference type="GO" id="GO:0000050">
    <property type="term" value="P:urea cycle"/>
    <property type="evidence" value="ECO:0007669"/>
    <property type="project" value="TreeGrafter"/>
</dbReference>
<dbReference type="CDD" id="cd01999">
    <property type="entry name" value="ASS"/>
    <property type="match status" value="1"/>
</dbReference>
<dbReference type="FunFam" id="3.40.50.620:FF:000019">
    <property type="entry name" value="Argininosuccinate synthase"/>
    <property type="match status" value="1"/>
</dbReference>
<dbReference type="FunFam" id="3.90.1260.10:FF:000007">
    <property type="entry name" value="Argininosuccinate synthase"/>
    <property type="match status" value="1"/>
</dbReference>
<dbReference type="Gene3D" id="3.90.1260.10">
    <property type="entry name" value="Argininosuccinate synthetase, chain A, domain 2"/>
    <property type="match status" value="1"/>
</dbReference>
<dbReference type="Gene3D" id="3.40.50.620">
    <property type="entry name" value="HUPs"/>
    <property type="match status" value="1"/>
</dbReference>
<dbReference type="Gene3D" id="1.20.5.470">
    <property type="entry name" value="Single helix bin"/>
    <property type="match status" value="1"/>
</dbReference>
<dbReference type="HAMAP" id="MF_00005">
    <property type="entry name" value="Arg_succ_synth_type1"/>
    <property type="match status" value="1"/>
</dbReference>
<dbReference type="InterPro" id="IPR048268">
    <property type="entry name" value="Arginosuc_syn_C"/>
</dbReference>
<dbReference type="InterPro" id="IPR048267">
    <property type="entry name" value="Arginosuc_syn_N"/>
</dbReference>
<dbReference type="InterPro" id="IPR001518">
    <property type="entry name" value="Arginosuc_synth"/>
</dbReference>
<dbReference type="InterPro" id="IPR018223">
    <property type="entry name" value="Arginosuc_synth_CS"/>
</dbReference>
<dbReference type="InterPro" id="IPR023434">
    <property type="entry name" value="Arginosuc_synth_type_1_subfam"/>
</dbReference>
<dbReference type="InterPro" id="IPR024074">
    <property type="entry name" value="AS_cat/multimer_dom_body"/>
</dbReference>
<dbReference type="InterPro" id="IPR014729">
    <property type="entry name" value="Rossmann-like_a/b/a_fold"/>
</dbReference>
<dbReference type="NCBIfam" id="TIGR00032">
    <property type="entry name" value="argG"/>
    <property type="match status" value="1"/>
</dbReference>
<dbReference type="NCBIfam" id="NF001770">
    <property type="entry name" value="PRK00509.1"/>
    <property type="match status" value="1"/>
</dbReference>
<dbReference type="PANTHER" id="PTHR11587">
    <property type="entry name" value="ARGININOSUCCINATE SYNTHASE"/>
    <property type="match status" value="1"/>
</dbReference>
<dbReference type="PANTHER" id="PTHR11587:SF2">
    <property type="entry name" value="ARGININOSUCCINATE SYNTHASE"/>
    <property type="match status" value="1"/>
</dbReference>
<dbReference type="Pfam" id="PF20979">
    <property type="entry name" value="Arginosuc_syn_C"/>
    <property type="match status" value="1"/>
</dbReference>
<dbReference type="Pfam" id="PF00764">
    <property type="entry name" value="Arginosuc_synth"/>
    <property type="match status" value="1"/>
</dbReference>
<dbReference type="SUPFAM" id="SSF52402">
    <property type="entry name" value="Adenine nucleotide alpha hydrolases-like"/>
    <property type="match status" value="1"/>
</dbReference>
<dbReference type="SUPFAM" id="SSF69864">
    <property type="entry name" value="Argininosuccinate synthetase, C-terminal domain"/>
    <property type="match status" value="1"/>
</dbReference>
<dbReference type="PROSITE" id="PS00564">
    <property type="entry name" value="ARGININOSUCCIN_SYN_1"/>
    <property type="match status" value="1"/>
</dbReference>
<dbReference type="PROSITE" id="PS00565">
    <property type="entry name" value="ARGININOSUCCIN_SYN_2"/>
    <property type="match status" value="1"/>
</dbReference>
<accession>Q9K4Y8</accession>
<comment type="catalytic activity">
    <reaction evidence="1">
        <text>L-citrulline + L-aspartate + ATP = 2-(N(omega)-L-arginino)succinate + AMP + diphosphate + H(+)</text>
        <dbReference type="Rhea" id="RHEA:10932"/>
        <dbReference type="ChEBI" id="CHEBI:15378"/>
        <dbReference type="ChEBI" id="CHEBI:29991"/>
        <dbReference type="ChEBI" id="CHEBI:30616"/>
        <dbReference type="ChEBI" id="CHEBI:33019"/>
        <dbReference type="ChEBI" id="CHEBI:57472"/>
        <dbReference type="ChEBI" id="CHEBI:57743"/>
        <dbReference type="ChEBI" id="CHEBI:456215"/>
        <dbReference type="EC" id="6.3.4.5"/>
    </reaction>
</comment>
<comment type="pathway">
    <text evidence="1">Amino-acid biosynthesis; L-arginine biosynthesis; L-arginine from L-ornithine and carbamoyl phosphate: step 2/3.</text>
</comment>
<comment type="subunit">
    <text evidence="1">Homotetramer.</text>
</comment>
<comment type="subcellular location">
    <subcellularLocation>
        <location evidence="1">Cytoplasm</location>
    </subcellularLocation>
</comment>
<comment type="similarity">
    <text evidence="1">Belongs to the argininosuccinate synthase family. Type 1 subfamily.</text>
</comment>
<organism>
    <name type="scientific">Moritella abyssi</name>
    <dbReference type="NCBI Taxonomy" id="111292"/>
    <lineage>
        <taxon>Bacteria</taxon>
        <taxon>Pseudomonadati</taxon>
        <taxon>Pseudomonadota</taxon>
        <taxon>Gammaproteobacteria</taxon>
        <taxon>Alteromonadales</taxon>
        <taxon>Moritellaceae</taxon>
        <taxon>Moritella</taxon>
    </lineage>
</organism>
<feature type="chain" id="PRO_0000148612" description="Argininosuccinate synthase">
    <location>
        <begin position="1"/>
        <end position="404"/>
    </location>
</feature>
<feature type="binding site" evidence="1">
    <location>
        <begin position="11"/>
        <end position="19"/>
    </location>
    <ligand>
        <name>ATP</name>
        <dbReference type="ChEBI" id="CHEBI:30616"/>
    </ligand>
</feature>
<feature type="binding site" evidence="1">
    <location>
        <position position="40"/>
    </location>
    <ligand>
        <name>ATP</name>
        <dbReference type="ChEBI" id="CHEBI:30616"/>
    </ligand>
</feature>
<feature type="binding site" evidence="1">
    <location>
        <position position="92"/>
    </location>
    <ligand>
        <name>L-citrulline</name>
        <dbReference type="ChEBI" id="CHEBI:57743"/>
    </ligand>
</feature>
<feature type="binding site" evidence="1">
    <location>
        <position position="97"/>
    </location>
    <ligand>
        <name>L-citrulline</name>
        <dbReference type="ChEBI" id="CHEBI:57743"/>
    </ligand>
</feature>
<feature type="binding site" evidence="1">
    <location>
        <position position="122"/>
    </location>
    <ligand>
        <name>ATP</name>
        <dbReference type="ChEBI" id="CHEBI:30616"/>
    </ligand>
</feature>
<feature type="binding site" evidence="1">
    <location>
        <position position="124"/>
    </location>
    <ligand>
        <name>L-aspartate</name>
        <dbReference type="ChEBI" id="CHEBI:29991"/>
    </ligand>
</feature>
<feature type="binding site" evidence="1">
    <location>
        <position position="128"/>
    </location>
    <ligand>
        <name>L-aspartate</name>
        <dbReference type="ChEBI" id="CHEBI:29991"/>
    </ligand>
</feature>
<feature type="binding site" evidence="1">
    <location>
        <position position="128"/>
    </location>
    <ligand>
        <name>L-citrulline</name>
        <dbReference type="ChEBI" id="CHEBI:57743"/>
    </ligand>
</feature>
<feature type="binding site" evidence="1">
    <location>
        <position position="129"/>
    </location>
    <ligand>
        <name>L-aspartate</name>
        <dbReference type="ChEBI" id="CHEBI:29991"/>
    </ligand>
</feature>
<feature type="binding site" evidence="1">
    <location>
        <position position="132"/>
    </location>
    <ligand>
        <name>L-citrulline</name>
        <dbReference type="ChEBI" id="CHEBI:57743"/>
    </ligand>
</feature>
<feature type="binding site" evidence="1">
    <location>
        <position position="181"/>
    </location>
    <ligand>
        <name>L-citrulline</name>
        <dbReference type="ChEBI" id="CHEBI:57743"/>
    </ligand>
</feature>
<feature type="binding site" evidence="1">
    <location>
        <position position="190"/>
    </location>
    <ligand>
        <name>L-citrulline</name>
        <dbReference type="ChEBI" id="CHEBI:57743"/>
    </ligand>
</feature>
<feature type="binding site" evidence="1">
    <location>
        <position position="266"/>
    </location>
    <ligand>
        <name>L-citrulline</name>
        <dbReference type="ChEBI" id="CHEBI:57743"/>
    </ligand>
</feature>
<feature type="binding site" evidence="1">
    <location>
        <position position="278"/>
    </location>
    <ligand>
        <name>L-citrulline</name>
        <dbReference type="ChEBI" id="CHEBI:57743"/>
    </ligand>
</feature>
<reference key="1">
    <citation type="journal article" date="2000" name="J. Bacteriol.">
        <title>Evolution of arginine biosynthesis in the bacterial domain: novel gene-enzyme relationships from psychrophilic Moritella strains (Vibrionaceae) and evolutionary significance of N-alpha-acetyl ornithinase.</title>
        <authorList>
            <person name="Xu Y."/>
            <person name="Liang Z."/>
            <person name="Legrain C."/>
            <person name="Ruger H.J."/>
            <person name="Glansdorff N."/>
        </authorList>
    </citation>
    <scope>NUCLEOTIDE SEQUENCE [GENOMIC DNA]</scope>
    <source>
        <strain>JCM 11436 / CIP 108121 / LMG 21258 / 2693</strain>
    </source>
</reference>